<accession>Q96GV9</accession>
<organism>
    <name type="scientific">Homo sapiens</name>
    <name type="common">Human</name>
    <dbReference type="NCBI Taxonomy" id="9606"/>
    <lineage>
        <taxon>Eukaryota</taxon>
        <taxon>Metazoa</taxon>
        <taxon>Chordata</taxon>
        <taxon>Craniata</taxon>
        <taxon>Vertebrata</taxon>
        <taxon>Euteleostomi</taxon>
        <taxon>Mammalia</taxon>
        <taxon>Eutheria</taxon>
        <taxon>Euarchontoglires</taxon>
        <taxon>Primates</taxon>
        <taxon>Haplorrhini</taxon>
        <taxon>Catarrhini</taxon>
        <taxon>Hominidae</taxon>
        <taxon>Homo</taxon>
    </lineage>
</organism>
<name>MACIR_HUMAN</name>
<gene>
    <name evidence="10" type="primary">MACIR</name>
    <name type="synonym">C5orf30</name>
</gene>
<sequence>MEVDINGESRSTLTTLPFPGAEANSPGKAEAEKPRCSSTPCSPMRRTVSGYQILHMDSNYLVGFTTGEELLKLAQKCTGGEESKAEAMPSLRSKQLDAGLARSSRLYKTRSRYYQPYEIPAVNGRRRRRMPSSGDKCTKSLPYEPYKALHGPLPLCLLKGKRAHSKSLDYLNLDKMIKEPADTEVLQYQLQHLTLRGDRVFARNNT</sequence>
<dbReference type="EMBL" id="AK090558">
    <property type="protein sequence ID" value="BAC03478.1"/>
    <property type="molecule type" value="mRNA"/>
</dbReference>
<dbReference type="EMBL" id="CH471086">
    <property type="protein sequence ID" value="EAW49075.1"/>
    <property type="molecule type" value="Genomic_DNA"/>
</dbReference>
<dbReference type="EMBL" id="BC009203">
    <property type="protein sequence ID" value="AAH09203.1"/>
    <property type="molecule type" value="mRNA"/>
</dbReference>
<dbReference type="CCDS" id="CCDS4095.1"/>
<dbReference type="RefSeq" id="NP_001303897.1">
    <property type="nucleotide sequence ID" value="NM_001316968.2"/>
</dbReference>
<dbReference type="RefSeq" id="NP_001303898.1">
    <property type="nucleotide sequence ID" value="NM_001316969.2"/>
</dbReference>
<dbReference type="RefSeq" id="NP_001364212.1">
    <property type="nucleotide sequence ID" value="NM_001377283.1"/>
</dbReference>
<dbReference type="RefSeq" id="NP_001364213.1">
    <property type="nucleotide sequence ID" value="NM_001377284.1"/>
</dbReference>
<dbReference type="RefSeq" id="NP_001364214.1">
    <property type="nucleotide sequence ID" value="NM_001377285.1"/>
</dbReference>
<dbReference type="RefSeq" id="NP_001364215.1">
    <property type="nucleotide sequence ID" value="NM_001377286.1"/>
</dbReference>
<dbReference type="RefSeq" id="NP_001364216.1">
    <property type="nucleotide sequence ID" value="NM_001377287.1"/>
</dbReference>
<dbReference type="RefSeq" id="NP_001364217.1">
    <property type="nucleotide sequence ID" value="NM_001377288.1"/>
</dbReference>
<dbReference type="RefSeq" id="NP_149988.1">
    <property type="nucleotide sequence ID" value="NM_033211.4"/>
</dbReference>
<dbReference type="BioGRID" id="124702">
    <property type="interactions" value="32"/>
</dbReference>
<dbReference type="FunCoup" id="Q96GV9">
    <property type="interactions" value="336"/>
</dbReference>
<dbReference type="IntAct" id="Q96GV9">
    <property type="interactions" value="28"/>
</dbReference>
<dbReference type="STRING" id="9606.ENSP00000326110"/>
<dbReference type="iPTMnet" id="Q96GV9"/>
<dbReference type="PhosphoSitePlus" id="Q96GV9"/>
<dbReference type="BioMuta" id="C5orf30"/>
<dbReference type="jPOST" id="Q96GV9"/>
<dbReference type="MassIVE" id="Q96GV9"/>
<dbReference type="PaxDb" id="9606-ENSP00000326110"/>
<dbReference type="PeptideAtlas" id="Q96GV9"/>
<dbReference type="ProteomicsDB" id="76669"/>
<dbReference type="Pumba" id="Q96GV9"/>
<dbReference type="Antibodypedia" id="52940">
    <property type="antibodies" value="6 antibodies from 6 providers"/>
</dbReference>
<dbReference type="DNASU" id="90355"/>
<dbReference type="Ensembl" id="ENST00000319933.7">
    <property type="protein sequence ID" value="ENSP00000326110.2"/>
    <property type="gene ID" value="ENSG00000181751.10"/>
</dbReference>
<dbReference type="Ensembl" id="ENST00000510890.1">
    <property type="protein sequence ID" value="ENSP00000421270.1"/>
    <property type="gene ID" value="ENSG00000181751.10"/>
</dbReference>
<dbReference type="Ensembl" id="ENST00000515669.5">
    <property type="protein sequence ID" value="ENSP00000422836.1"/>
    <property type="gene ID" value="ENSG00000181751.10"/>
</dbReference>
<dbReference type="GeneID" id="90355"/>
<dbReference type="KEGG" id="hsa:90355"/>
<dbReference type="MANE-Select" id="ENST00000319933.7">
    <property type="protein sequence ID" value="ENSP00000326110.2"/>
    <property type="RefSeq nucleotide sequence ID" value="NM_033211.4"/>
    <property type="RefSeq protein sequence ID" value="NP_149988.1"/>
</dbReference>
<dbReference type="UCSC" id="uc003kog.2">
    <property type="organism name" value="human"/>
</dbReference>
<dbReference type="AGR" id="HGNC:25052"/>
<dbReference type="CTD" id="90355"/>
<dbReference type="DisGeNET" id="90355"/>
<dbReference type="GeneCards" id="MACIR"/>
<dbReference type="HGNC" id="HGNC:25052">
    <property type="gene designation" value="MACIR"/>
</dbReference>
<dbReference type="HPA" id="ENSG00000181751">
    <property type="expression patterns" value="Tissue enhanced (bone)"/>
</dbReference>
<dbReference type="MIM" id="616608">
    <property type="type" value="gene"/>
</dbReference>
<dbReference type="neXtProt" id="NX_Q96GV9"/>
<dbReference type="OpenTargets" id="ENSG00000181751"/>
<dbReference type="VEuPathDB" id="HostDB:ENSG00000181751"/>
<dbReference type="eggNOG" id="ENOG502QRGS">
    <property type="taxonomic scope" value="Eukaryota"/>
</dbReference>
<dbReference type="GeneTree" id="ENSGT00390000005782"/>
<dbReference type="HOGENOM" id="CLU_082309_0_0_1"/>
<dbReference type="InParanoid" id="Q96GV9"/>
<dbReference type="OMA" id="LAHKCTG"/>
<dbReference type="OrthoDB" id="9859373at2759"/>
<dbReference type="PAN-GO" id="Q96GV9">
    <property type="GO annotations" value="2 GO annotations based on evolutionary models"/>
</dbReference>
<dbReference type="PhylomeDB" id="Q96GV9"/>
<dbReference type="TreeFam" id="TF331553"/>
<dbReference type="PathwayCommons" id="Q96GV9"/>
<dbReference type="SignaLink" id="Q96GV9"/>
<dbReference type="BioGRID-ORCS" id="90355">
    <property type="hits" value="22 hits in 1125 CRISPR screens"/>
</dbReference>
<dbReference type="ChiTaRS" id="C5orf30">
    <property type="organism name" value="human"/>
</dbReference>
<dbReference type="GenomeRNAi" id="90355"/>
<dbReference type="Pharos" id="Q96GV9">
    <property type="development level" value="Tdark"/>
</dbReference>
<dbReference type="PRO" id="PR:Q96GV9"/>
<dbReference type="Proteomes" id="UP000005640">
    <property type="component" value="Chromosome 5"/>
</dbReference>
<dbReference type="RNAct" id="Q96GV9">
    <property type="molecule type" value="protein"/>
</dbReference>
<dbReference type="Bgee" id="ENSG00000181751">
    <property type="expression patterns" value="Expressed in middle temporal gyrus and 194 other cell types or tissues"/>
</dbReference>
<dbReference type="GO" id="GO:0035869">
    <property type="term" value="C:ciliary transition zone"/>
    <property type="evidence" value="ECO:0000314"/>
    <property type="project" value="UniProtKB"/>
</dbReference>
<dbReference type="GO" id="GO:0005737">
    <property type="term" value="C:cytoplasm"/>
    <property type="evidence" value="ECO:0000314"/>
    <property type="project" value="UniProtKB"/>
</dbReference>
<dbReference type="GO" id="GO:0060271">
    <property type="term" value="P:cilium assembly"/>
    <property type="evidence" value="ECO:0000250"/>
    <property type="project" value="UniProtKB"/>
</dbReference>
<dbReference type="GO" id="GO:0010631">
    <property type="term" value="P:epithelial cell migration"/>
    <property type="evidence" value="ECO:0007669"/>
    <property type="project" value="Ensembl"/>
</dbReference>
<dbReference type="GO" id="GO:0010761">
    <property type="term" value="P:fibroblast migration"/>
    <property type="evidence" value="ECO:0007669"/>
    <property type="project" value="Ensembl"/>
</dbReference>
<dbReference type="GO" id="GO:0006954">
    <property type="term" value="P:inflammatory response"/>
    <property type="evidence" value="ECO:0007669"/>
    <property type="project" value="UniProtKB-KW"/>
</dbReference>
<dbReference type="GO" id="GO:1900016">
    <property type="term" value="P:negative regulation of cytokine production involved in inflammatory response"/>
    <property type="evidence" value="ECO:0000318"/>
    <property type="project" value="GO_Central"/>
</dbReference>
<dbReference type="GO" id="GO:0010633">
    <property type="term" value="P:negative regulation of epithelial cell migration"/>
    <property type="evidence" value="ECO:0007669"/>
    <property type="project" value="Ensembl"/>
</dbReference>
<dbReference type="GO" id="GO:0010764">
    <property type="term" value="P:negative regulation of fibroblast migration"/>
    <property type="evidence" value="ECO:0000318"/>
    <property type="project" value="GO_Central"/>
</dbReference>
<dbReference type="GO" id="GO:0050728">
    <property type="term" value="P:negative regulation of inflammatory response"/>
    <property type="evidence" value="ECO:0000315"/>
    <property type="project" value="UniProtKB"/>
</dbReference>
<dbReference type="GO" id="GO:0015031">
    <property type="term" value="P:protein transport"/>
    <property type="evidence" value="ECO:0007669"/>
    <property type="project" value="UniProtKB-KW"/>
</dbReference>
<dbReference type="InterPro" id="IPR029219">
    <property type="entry name" value="UNC119-bd"/>
</dbReference>
<dbReference type="PANTHER" id="PTHR31224:SF2">
    <property type="entry name" value="MACROPHAGE IMMUNOMETABOLISM REGULATOR"/>
    <property type="match status" value="1"/>
</dbReference>
<dbReference type="PANTHER" id="PTHR31224">
    <property type="entry name" value="UNC119-BINDING PROTEIN C5ORF30"/>
    <property type="match status" value="1"/>
</dbReference>
<dbReference type="Pfam" id="PF15435">
    <property type="entry name" value="UNC119_bdg"/>
    <property type="match status" value="1"/>
</dbReference>
<reference key="1">
    <citation type="journal article" date="2004" name="Nat. Genet.">
        <title>Complete sequencing and characterization of 21,243 full-length human cDNAs.</title>
        <authorList>
            <person name="Ota T."/>
            <person name="Suzuki Y."/>
            <person name="Nishikawa T."/>
            <person name="Otsuki T."/>
            <person name="Sugiyama T."/>
            <person name="Irie R."/>
            <person name="Wakamatsu A."/>
            <person name="Hayashi K."/>
            <person name="Sato H."/>
            <person name="Nagai K."/>
            <person name="Kimura K."/>
            <person name="Makita H."/>
            <person name="Sekine M."/>
            <person name="Obayashi M."/>
            <person name="Nishi T."/>
            <person name="Shibahara T."/>
            <person name="Tanaka T."/>
            <person name="Ishii S."/>
            <person name="Yamamoto J."/>
            <person name="Saito K."/>
            <person name="Kawai Y."/>
            <person name="Isono Y."/>
            <person name="Nakamura Y."/>
            <person name="Nagahari K."/>
            <person name="Murakami K."/>
            <person name="Yasuda T."/>
            <person name="Iwayanagi T."/>
            <person name="Wagatsuma M."/>
            <person name="Shiratori A."/>
            <person name="Sudo H."/>
            <person name="Hosoiri T."/>
            <person name="Kaku Y."/>
            <person name="Kodaira H."/>
            <person name="Kondo H."/>
            <person name="Sugawara M."/>
            <person name="Takahashi M."/>
            <person name="Kanda K."/>
            <person name="Yokoi T."/>
            <person name="Furuya T."/>
            <person name="Kikkawa E."/>
            <person name="Omura Y."/>
            <person name="Abe K."/>
            <person name="Kamihara K."/>
            <person name="Katsuta N."/>
            <person name="Sato K."/>
            <person name="Tanikawa M."/>
            <person name="Yamazaki M."/>
            <person name="Ninomiya K."/>
            <person name="Ishibashi T."/>
            <person name="Yamashita H."/>
            <person name="Murakawa K."/>
            <person name="Fujimori K."/>
            <person name="Tanai H."/>
            <person name="Kimata M."/>
            <person name="Watanabe M."/>
            <person name="Hiraoka S."/>
            <person name="Chiba Y."/>
            <person name="Ishida S."/>
            <person name="Ono Y."/>
            <person name="Takiguchi S."/>
            <person name="Watanabe S."/>
            <person name="Yosida M."/>
            <person name="Hotuta T."/>
            <person name="Kusano J."/>
            <person name="Kanehori K."/>
            <person name="Takahashi-Fujii A."/>
            <person name="Hara H."/>
            <person name="Tanase T.-O."/>
            <person name="Nomura Y."/>
            <person name="Togiya S."/>
            <person name="Komai F."/>
            <person name="Hara R."/>
            <person name="Takeuchi K."/>
            <person name="Arita M."/>
            <person name="Imose N."/>
            <person name="Musashino K."/>
            <person name="Yuuki H."/>
            <person name="Oshima A."/>
            <person name="Sasaki N."/>
            <person name="Aotsuka S."/>
            <person name="Yoshikawa Y."/>
            <person name="Matsunawa H."/>
            <person name="Ichihara T."/>
            <person name="Shiohata N."/>
            <person name="Sano S."/>
            <person name="Moriya S."/>
            <person name="Momiyama H."/>
            <person name="Satoh N."/>
            <person name="Takami S."/>
            <person name="Terashima Y."/>
            <person name="Suzuki O."/>
            <person name="Nakagawa S."/>
            <person name="Senoh A."/>
            <person name="Mizoguchi H."/>
            <person name="Goto Y."/>
            <person name="Shimizu F."/>
            <person name="Wakebe H."/>
            <person name="Hishigaki H."/>
            <person name="Watanabe T."/>
            <person name="Sugiyama A."/>
            <person name="Takemoto M."/>
            <person name="Kawakami B."/>
            <person name="Yamazaki M."/>
            <person name="Watanabe K."/>
            <person name="Kumagai A."/>
            <person name="Itakura S."/>
            <person name="Fukuzumi Y."/>
            <person name="Fujimori Y."/>
            <person name="Komiyama M."/>
            <person name="Tashiro H."/>
            <person name="Tanigami A."/>
            <person name="Fujiwara T."/>
            <person name="Ono T."/>
            <person name="Yamada K."/>
            <person name="Fujii Y."/>
            <person name="Ozaki K."/>
            <person name="Hirao M."/>
            <person name="Ohmori Y."/>
            <person name="Kawabata A."/>
            <person name="Hikiji T."/>
            <person name="Kobatake N."/>
            <person name="Inagaki H."/>
            <person name="Ikema Y."/>
            <person name="Okamoto S."/>
            <person name="Okitani R."/>
            <person name="Kawakami T."/>
            <person name="Noguchi S."/>
            <person name="Itoh T."/>
            <person name="Shigeta K."/>
            <person name="Senba T."/>
            <person name="Matsumura K."/>
            <person name="Nakajima Y."/>
            <person name="Mizuno T."/>
            <person name="Morinaga M."/>
            <person name="Sasaki M."/>
            <person name="Togashi T."/>
            <person name="Oyama M."/>
            <person name="Hata H."/>
            <person name="Watanabe M."/>
            <person name="Komatsu T."/>
            <person name="Mizushima-Sugano J."/>
            <person name="Satoh T."/>
            <person name="Shirai Y."/>
            <person name="Takahashi Y."/>
            <person name="Nakagawa K."/>
            <person name="Okumura K."/>
            <person name="Nagase T."/>
            <person name="Nomura N."/>
            <person name="Kikuchi H."/>
            <person name="Masuho Y."/>
            <person name="Yamashita R."/>
            <person name="Nakai K."/>
            <person name="Yada T."/>
            <person name="Nakamura Y."/>
            <person name="Ohara O."/>
            <person name="Isogai T."/>
            <person name="Sugano S."/>
        </authorList>
    </citation>
    <scope>NUCLEOTIDE SEQUENCE [LARGE SCALE MRNA]</scope>
    <source>
        <tissue>Astrocyte</tissue>
    </source>
</reference>
<reference key="2">
    <citation type="submission" date="2005-09" db="EMBL/GenBank/DDBJ databases">
        <authorList>
            <person name="Mural R.J."/>
            <person name="Istrail S."/>
            <person name="Sutton G.G."/>
            <person name="Florea L."/>
            <person name="Halpern A.L."/>
            <person name="Mobarry C.M."/>
            <person name="Lippert R."/>
            <person name="Walenz B."/>
            <person name="Shatkay H."/>
            <person name="Dew I."/>
            <person name="Miller J.R."/>
            <person name="Flanigan M.J."/>
            <person name="Edwards N.J."/>
            <person name="Bolanos R."/>
            <person name="Fasulo D."/>
            <person name="Halldorsson B.V."/>
            <person name="Hannenhalli S."/>
            <person name="Turner R."/>
            <person name="Yooseph S."/>
            <person name="Lu F."/>
            <person name="Nusskern D.R."/>
            <person name="Shue B.C."/>
            <person name="Zheng X.H."/>
            <person name="Zhong F."/>
            <person name="Delcher A.L."/>
            <person name="Huson D.H."/>
            <person name="Kravitz S.A."/>
            <person name="Mouchard L."/>
            <person name="Reinert K."/>
            <person name="Remington K.A."/>
            <person name="Clark A.G."/>
            <person name="Waterman M.S."/>
            <person name="Eichler E.E."/>
            <person name="Adams M.D."/>
            <person name="Hunkapiller M.W."/>
            <person name="Myers E.W."/>
            <person name="Venter J.C."/>
        </authorList>
    </citation>
    <scope>NUCLEOTIDE SEQUENCE [LARGE SCALE GENOMIC DNA]</scope>
</reference>
<reference key="3">
    <citation type="journal article" date="2004" name="Genome Res.">
        <title>The status, quality, and expansion of the NIH full-length cDNA project: the Mammalian Gene Collection (MGC).</title>
        <authorList>
            <consortium name="The MGC Project Team"/>
        </authorList>
    </citation>
    <scope>NUCLEOTIDE SEQUENCE [LARGE SCALE MRNA]</scope>
    <source>
        <tissue>Brain</tissue>
    </source>
</reference>
<reference key="4">
    <citation type="journal article" date="2008" name="Proc. Natl. Acad. Sci. U.S.A.">
        <title>A quantitative atlas of mitotic phosphorylation.</title>
        <authorList>
            <person name="Dephoure N."/>
            <person name="Zhou C."/>
            <person name="Villen J."/>
            <person name="Beausoleil S.A."/>
            <person name="Bakalarski C.E."/>
            <person name="Elledge S.J."/>
            <person name="Gygi S.P."/>
        </authorList>
    </citation>
    <scope>PHOSPHORYLATION [LARGE SCALE ANALYSIS] AT SER-167</scope>
    <scope>IDENTIFICATION BY MASS SPECTROMETRY [LARGE SCALE ANALYSIS]</scope>
    <source>
        <tissue>Cervix carcinoma</tissue>
    </source>
</reference>
<reference key="5">
    <citation type="journal article" date="2010" name="Sci. Signal.">
        <title>Quantitative phosphoproteomics reveals widespread full phosphorylation site occupancy during mitosis.</title>
        <authorList>
            <person name="Olsen J.V."/>
            <person name="Vermeulen M."/>
            <person name="Santamaria A."/>
            <person name="Kumar C."/>
            <person name="Miller M.L."/>
            <person name="Jensen L.J."/>
            <person name="Gnad F."/>
            <person name="Cox J."/>
            <person name="Jensen T.S."/>
            <person name="Nigg E.A."/>
            <person name="Brunak S."/>
            <person name="Mann M."/>
        </authorList>
    </citation>
    <scope>PHOSPHORYLATION [LARGE SCALE ANALYSIS] AT SER-167</scope>
    <scope>IDENTIFICATION BY MASS SPECTROMETRY [LARGE SCALE ANALYSIS]</scope>
    <source>
        <tissue>Cervix carcinoma</tissue>
    </source>
</reference>
<reference key="6">
    <citation type="journal article" date="2011" name="Genes Dev.">
        <title>An ARL3-UNC119-RP2 GTPase cycle targets myristoylated NPHP3 to the primary cilium.</title>
        <authorList>
            <person name="Wright K.J."/>
            <person name="Baye L.M."/>
            <person name="Olivier-Mason A."/>
            <person name="Mukhopadhyay S."/>
            <person name="Sang L."/>
            <person name="Kwong M."/>
            <person name="Wang W."/>
            <person name="Pretorius P.R."/>
            <person name="Sheffield V.C."/>
            <person name="Sengupta P."/>
            <person name="Slusarski D.C."/>
            <person name="Jackson P.K."/>
        </authorList>
    </citation>
    <scope>FUNCTION</scope>
    <scope>SUBCELLULAR LOCATION</scope>
    <scope>INTERACTION WITH UNC119 AND UNC119B</scope>
</reference>
<reference key="7">
    <citation type="journal article" date="2011" name="Sci. Signal.">
        <title>System-wide temporal characterization of the proteome and phosphoproteome of human embryonic stem cell differentiation.</title>
        <authorList>
            <person name="Rigbolt K.T."/>
            <person name="Prokhorova T.A."/>
            <person name="Akimov V."/>
            <person name="Henningsen J."/>
            <person name="Johansen P.T."/>
            <person name="Kratchmarova I."/>
            <person name="Kassem M."/>
            <person name="Mann M."/>
            <person name="Olsen J.V."/>
            <person name="Blagoev B."/>
        </authorList>
    </citation>
    <scope>PHOSPHORYLATION [LARGE SCALE ANALYSIS] AT SER-25 AND SER-167</scope>
    <scope>IDENTIFICATION BY MASS SPECTROMETRY [LARGE SCALE ANALYSIS]</scope>
</reference>
<reference key="8">
    <citation type="journal article" date="2012" name="Proc. Natl. Acad. Sci. U.S.A.">
        <title>N-terminal acetylome analyses and functional insights of the N-terminal acetyltransferase NatB.</title>
        <authorList>
            <person name="Van Damme P."/>
            <person name="Lasa M."/>
            <person name="Polevoda B."/>
            <person name="Gazquez C."/>
            <person name="Elosegui-Artola A."/>
            <person name="Kim D.S."/>
            <person name="De Juan-Pardo E."/>
            <person name="Demeyer K."/>
            <person name="Hole K."/>
            <person name="Larrea E."/>
            <person name="Timmerman E."/>
            <person name="Prieto J."/>
            <person name="Arnesen T."/>
            <person name="Sherman F."/>
            <person name="Gevaert K."/>
            <person name="Aldabe R."/>
        </authorList>
    </citation>
    <scope>ACETYLATION [LARGE SCALE ANALYSIS] AT MET-1</scope>
    <scope>IDENTIFICATION BY MASS SPECTROMETRY [LARGE SCALE ANALYSIS]</scope>
</reference>
<reference key="9">
    <citation type="journal article" date="2013" name="J. Proteome Res.">
        <title>Toward a comprehensive characterization of a human cancer cell phosphoproteome.</title>
        <authorList>
            <person name="Zhou H."/>
            <person name="Di Palma S."/>
            <person name="Preisinger C."/>
            <person name="Peng M."/>
            <person name="Polat A.N."/>
            <person name="Heck A.J."/>
            <person name="Mohammed S."/>
        </authorList>
    </citation>
    <scope>PHOSPHORYLATION [LARGE SCALE ANALYSIS] AT SER-25; SER-140 AND SER-167</scope>
    <scope>IDENTIFICATION BY MASS SPECTROMETRY [LARGE SCALE ANALYSIS]</scope>
    <source>
        <tissue>Cervix carcinoma</tissue>
        <tissue>Erythroleukemia</tissue>
    </source>
</reference>
<reference key="10">
    <citation type="journal article" date="2015" name="Proc. Natl. Acad. Sci. U.S.A.">
        <title>C5orf30 is a negative regulator of tissue damage in rheumatoid arthritis.</title>
        <authorList>
            <person name="Muthana M."/>
            <person name="Hawtree S."/>
            <person name="Wilshaw A."/>
            <person name="Linehan E."/>
            <person name="Roberts H."/>
            <person name="Khetan S."/>
            <person name="Adeleke G."/>
            <person name="Wright F."/>
            <person name="Akil M."/>
            <person name="Fearon U."/>
            <person name="Veale D."/>
            <person name="Ciani B."/>
            <person name="Wilson A.G."/>
        </authorList>
    </citation>
    <scope>TISSUE SPECIFICITY</scope>
    <scope>INDUCTION</scope>
</reference>
<reference key="11">
    <citation type="journal article" date="2019" name="J. Immunol.">
        <title>The Autoimmune Susceptibility Gene C5orf30 Regulates Macrophage-Mediated Resolution of Inflammation.</title>
        <authorList>
            <person name="Dorris E.R."/>
            <person name="Tazzyman S.J."/>
            <person name="Moylett J."/>
            <person name="Ramamoorthi N."/>
            <person name="Hackney J."/>
            <person name="Townsend M."/>
            <person name="Muthana M."/>
            <person name="Lewis M.J."/>
            <person name="Pitzalis C."/>
            <person name="Wilson A.G."/>
        </authorList>
    </citation>
    <scope>FUNCTION</scope>
    <scope>SUBCELLULAR LOCATION</scope>
    <scope>PHOSPHORYLATION</scope>
    <scope>INDUCTION</scope>
</reference>
<protein>
    <recommendedName>
        <fullName>Macrophage immunometabolism regulator</fullName>
    </recommendedName>
</protein>
<comment type="function">
    <text evidence="5 8">Regulates the macrophage function, by enhancing the resolution of inflammation and wound repair functions mediated by M2 macrophages (PubMed:30659109). The regulation of macrophage function is, due at least in part, to its ability to inhibit glycolysis (PubMed:30659109). May also play a role in trafficking of proteins via its interaction with UNC119 and UNC119B cargo adapters: may help the release of UNC119 and UNC119B cargo or the recycling of UNC119 and UNC119B (PubMed:22085962). May play a role in ciliary membrane localization via its interaction with UNC119B and protein transport into photoreceptor cells (PubMed:22085962).</text>
</comment>
<comment type="subunit">
    <text evidence="5">Interacts with UNC119 and UNC119B; interaction preferentially takes place when UNC119 and UNC119B are unliganded with myristoylated proteins.</text>
</comment>
<comment type="interaction">
    <interactant intactId="EBI-2350695">
        <id>Q96GV9</id>
    </interactant>
    <interactant intactId="EBI-371922">
        <id>Q96B26</id>
        <label>EXOSC8</label>
    </interactant>
    <organismsDiffer>false</organismsDiffer>
    <experiments>3</experiments>
</comment>
<comment type="interaction">
    <interactant intactId="EBI-2350695">
        <id>Q96GV9</id>
    </interactant>
    <interactant intactId="EBI-399080">
        <id>Q92993</id>
        <label>KAT5</label>
    </interactant>
    <organismsDiffer>false</organismsDiffer>
    <experiments>3</experiments>
</comment>
<comment type="interaction">
    <interactant intactId="EBI-2350695">
        <id>Q96GV9</id>
    </interactant>
    <interactant intactId="EBI-11742507">
        <id>Q8TAP4-4</id>
        <label>LMO3</label>
    </interactant>
    <organismsDiffer>false</organismsDiffer>
    <experiments>3</experiments>
</comment>
<comment type="interaction">
    <interactant intactId="EBI-2350695">
        <id>Q96GV9</id>
    </interactant>
    <interactant intactId="EBI-302345">
        <id>Q8ND90</id>
        <label>PNMA1</label>
    </interactant>
    <organismsDiffer>false</organismsDiffer>
    <experiments>3</experiments>
</comment>
<comment type="interaction">
    <interactant intactId="EBI-2350695">
        <id>Q96GV9</id>
    </interactant>
    <interactant intactId="EBI-9090795">
        <id>Q15047-2</id>
        <label>SETDB1</label>
    </interactant>
    <organismsDiffer>false</organismsDiffer>
    <experiments>3</experiments>
</comment>
<comment type="interaction">
    <interactant intactId="EBI-2350695">
        <id>Q96GV9</id>
    </interactant>
    <interactant intactId="EBI-359224">
        <id>Q13077</id>
        <label>TRAF1</label>
    </interactant>
    <organismsDiffer>false</organismsDiffer>
    <experiments>3</experiments>
</comment>
<comment type="interaction">
    <interactant intactId="EBI-2350695">
        <id>Q96GV9</id>
    </interactant>
    <interactant intactId="EBI-359832">
        <id>P61981</id>
        <label>YWHAG</label>
    </interactant>
    <organismsDiffer>false</organismsDiffer>
    <experiments>7</experiments>
</comment>
<comment type="subcellular location">
    <subcellularLocation>
        <location evidence="5 8">Cytoplasm</location>
    </subcellularLocation>
    <subcellularLocation>
        <location evidence="5">Cell projection</location>
        <location evidence="5">Cilium</location>
    </subcellularLocation>
    <text evidence="5">Localizes to the transition zone and proximal cilium in addition to being found throughout the cytoplasm.</text>
</comment>
<comment type="tissue specificity">
    <text evidence="7">High expression in normal macrophages, monocytes, and cultured rheumatoid arthritis synovial fibroblasts (RASFs), with lower expression in B- and T-cells, and little to no expression in other tissues and cell lines.</text>
</comment>
<comment type="induction">
    <text evidence="7 8">Up-regulated by hypoxia in cultured rheumatoid arthritis synovial fibroblasts (PubMed:26316022). Down-regulated by TNF in cultured rheumatoid arthritis synovial fibroblasts (PubMed:26316022). Down-regulated by the inflammatory mediators LPS and TNF in primary monocyte-derived macrophages via a c-Jun N-terminal kinase mediated mechanism (PubMed:30659109).</text>
</comment>
<comment type="PTM">
    <text evidence="2 3 4 6 8">Phosphorylated.</text>
</comment>
<comment type="similarity">
    <text evidence="9">Belongs to the UNC119-binding protein family.</text>
</comment>
<proteinExistence type="evidence at protein level"/>
<keyword id="KW-0007">Acetylation</keyword>
<keyword id="KW-0966">Cell projection</keyword>
<keyword id="KW-0969">Cilium</keyword>
<keyword id="KW-0970">Cilium biogenesis/degradation</keyword>
<keyword id="KW-0963">Cytoplasm</keyword>
<keyword id="KW-0395">Inflammatory response</keyword>
<keyword id="KW-0597">Phosphoprotein</keyword>
<keyword id="KW-0653">Protein transport</keyword>
<keyword id="KW-1267">Proteomics identification</keyword>
<keyword id="KW-1185">Reference proteome</keyword>
<keyword id="KW-0813">Transport</keyword>
<evidence type="ECO:0000256" key="1">
    <source>
        <dbReference type="SAM" id="MobiDB-lite"/>
    </source>
</evidence>
<evidence type="ECO:0000269" key="2">
    <source>
    </source>
</evidence>
<evidence type="ECO:0000269" key="3">
    <source>
    </source>
</evidence>
<evidence type="ECO:0000269" key="4">
    <source>
    </source>
</evidence>
<evidence type="ECO:0000269" key="5">
    <source>
    </source>
</evidence>
<evidence type="ECO:0000269" key="6">
    <source>
    </source>
</evidence>
<evidence type="ECO:0000269" key="7">
    <source>
    </source>
</evidence>
<evidence type="ECO:0000269" key="8">
    <source>
    </source>
</evidence>
<evidence type="ECO:0000305" key="9"/>
<evidence type="ECO:0000312" key="10">
    <source>
        <dbReference type="HGNC" id="HGNC:25052"/>
    </source>
</evidence>
<evidence type="ECO:0007744" key="11">
    <source>
    </source>
</evidence>
<evidence type="ECO:0007744" key="12">
    <source>
    </source>
</evidence>
<evidence type="ECO:0007744" key="13">
    <source>
    </source>
</evidence>
<evidence type="ECO:0007744" key="14">
    <source>
    </source>
</evidence>
<evidence type="ECO:0007744" key="15">
    <source>
    </source>
</evidence>
<feature type="chain" id="PRO_0000316776" description="Macrophage immunometabolism regulator">
    <location>
        <begin position="1"/>
        <end position="206"/>
    </location>
</feature>
<feature type="region of interest" description="Disordered" evidence="1">
    <location>
        <begin position="1"/>
        <end position="41"/>
    </location>
</feature>
<feature type="modified residue" description="N-acetylmethionine" evidence="14">
    <location>
        <position position="1"/>
    </location>
</feature>
<feature type="modified residue" description="Phosphoserine" evidence="13 15">
    <location>
        <position position="25"/>
    </location>
</feature>
<feature type="modified residue" description="Phosphoserine" evidence="15">
    <location>
        <position position="140"/>
    </location>
</feature>
<feature type="modified residue" description="Phosphoserine" evidence="11 12 13 15">
    <location>
        <position position="167"/>
    </location>
</feature>